<sequence>MLQNVTPHKLPGEGNAGLLGLGPEAAAPGKRIRKPSLLYEGFESPTMASVPALQLAPANPPPPEVSNPKKPGRVTNQLQYLHKVVMKALWKHQFAWPFRQPVDAVKLGLPDYHKIIKQPMDMGTIKRRLENNYYWAASECMQDFNTMFTNCYIYNKPTDDIVLMAQTLEKIFLQKVASMPQEEQELVVTIPKNSHKKGAKLAALQGSITSAHQVPAVSSVSHTALYTPPPEIPTTVLNIPHPSVISSPLLKSLHSAGPPLLAVSAAPPAQPLAKKKGVKRKADTTTPTPTAILAPGSPASPPGSLEPKAARLPPMRRESGRPIKPPRKDLPDSQQQHQSSKKGKLSEQLKHCNGILKELLSKKHAAYAWPFYKPVDASALGLHDYHDIIKHPMDLSTVKRKMENRDYRDAQEFAADVRLMFSNCYKYNPPDHDVVAMARKLQDVFEFRYAKMPDEPLEPGPLPVSTALPPGLAKSSSESSSEESSSESSSEEEEEEDEEDEEEESESSDSEEERAHRLAELQEQLRAVHEQLAALSQGPISKPKRKREKKEKKKKRKAEKHRGRIGIDEDDKGPRAPRPLQPKKSKKAGGGGSNATTLSHPGFGTSAGSSNKLPKKAQKTAPPVLPTGYDSEEEEESRPMSYDEKRQLSLDINKLPGEKLGRVVHIIQAREPSLRDSNPEEIEIDFETLKPSTLRELERYVLSCLRKKPRKPYTIRKPVGKTKEELALEKKRELEKRLQDVSGQLNSTKKPPKKASEKTESSAQQVAVSRLSASSSSSDSSSSSSSSSSSDTSDSDSG</sequence>
<accession>Q6MGA9</accession>
<comment type="function">
    <text evidence="1">Chromatin reader protein that specifically recognizes and binds histone H4 acetylated at 'Lys-5' and 'Lys-12' (H4K5ac and H4K12ac, respectively), thereby controlling gene expression and remodeling chromatin structures. Recruits transcription factors and coactivators to target gene sites, and activates RNA polymerase II machinery for transcriptional elongation. Plays a key role in genome compartmentalization via its association with CTCF and cohesin: recruited to chromatin by CTCF and promotes formation of topologically associating domains (TADs) via its ability to bind acetylated histones, contributing to CTCF boundary formation and enhancer insulation. Also recognizes and binds acetylated non-histone proteins, such as STAT3. Involved in inflammatory response by regulating differentiation of naive CD4(+) T-cells into T-helper Th17: recognizes and binds STAT3 acetylated at 'Lys-87', promoting STAT3 recruitment to chromatin. In addition to acetylated lysines, also recognizes and binds lysine residues on histones that are both methylated and acetylated on the same side chain to form N6-acetyl-N6-methyllysine (Kacme), an epigenetic mark of active chromatin associated with increased transcriptional initiation. Specifically binds histone H4 acetyl-methylated at 'Lys-5' and 'Lys-12' (H4K5acme and H4K12acme, respectively).</text>
</comment>
<comment type="subunit">
    <text evidence="1 2">Homodimer. Interacts with E2F1. Interacts with (acetylated) STAT3; promoting STAT3 recruitment to chromatin (By similarity). Interacts with CTCF; promoting BRD2 recruitment to chromatin (By similarity).</text>
</comment>
<comment type="subcellular location">
    <subcellularLocation>
        <location evidence="1">Nucleus</location>
    </subcellularLocation>
    <subcellularLocation>
        <location evidence="1">Chromosome</location>
    </subcellularLocation>
    <text evidence="1">Detected on chromatin and nucleosomes.</text>
</comment>
<comment type="domain">
    <text evidence="1">The first bromo domain specifically recognizes histone H4 acetylated at 'Lys-12' (H4K12ac). It also specifically binds histone H4 acetyl-methylated at 'Lys-5' and 'Lys-12' (H4K5acme and H4K12acme, respectively). The second bromo domain recognizes and binds histone H4 acetylated at 'Lys-5' and 'Lys-12' (H4K5ac and H4K12ac, respectively).</text>
</comment>
<comment type="similarity">
    <text evidence="7">Belongs to the BET family.</text>
</comment>
<feature type="chain" id="PRO_0000274006" description="Bromodomain-containing protein 2">
    <location>
        <begin position="1"/>
        <end position="798"/>
    </location>
</feature>
<feature type="domain" description="Bromo 1" evidence="4">
    <location>
        <begin position="73"/>
        <end position="179"/>
    </location>
</feature>
<feature type="domain" description="Bromo 2" evidence="4">
    <location>
        <begin position="343"/>
        <end position="452"/>
    </location>
</feature>
<feature type="domain" description="NET" evidence="5">
    <location>
        <begin position="630"/>
        <end position="712"/>
    </location>
</feature>
<feature type="region of interest" description="Disordered" evidence="6">
    <location>
        <begin position="1"/>
        <end position="21"/>
    </location>
</feature>
<feature type="region of interest" description="Disordered" evidence="6">
    <location>
        <begin position="53"/>
        <end position="72"/>
    </location>
</feature>
<feature type="region of interest" description="Disordered" evidence="6">
    <location>
        <begin position="267"/>
        <end position="348"/>
    </location>
</feature>
<feature type="region of interest" description="Disordered" evidence="6">
    <location>
        <begin position="455"/>
        <end position="648"/>
    </location>
</feature>
<feature type="region of interest" description="Disordered" evidence="6">
    <location>
        <begin position="735"/>
        <end position="798"/>
    </location>
</feature>
<feature type="short sequence motif" description="Nuclear localization signal" evidence="3">
    <location>
        <begin position="553"/>
        <end position="557"/>
    </location>
</feature>
<feature type="compositionally biased region" description="Low complexity" evidence="6">
    <location>
        <begin position="284"/>
        <end position="297"/>
    </location>
</feature>
<feature type="compositionally biased region" description="Basic and acidic residues" evidence="6">
    <location>
        <begin position="315"/>
        <end position="331"/>
    </location>
</feature>
<feature type="compositionally biased region" description="Acidic residues" evidence="6">
    <location>
        <begin position="480"/>
        <end position="512"/>
    </location>
</feature>
<feature type="compositionally biased region" description="Basic residues" evidence="6">
    <location>
        <begin position="542"/>
        <end position="564"/>
    </location>
</feature>
<feature type="compositionally biased region" description="Basic and acidic residues" evidence="6">
    <location>
        <begin position="637"/>
        <end position="648"/>
    </location>
</feature>
<feature type="compositionally biased region" description="Low complexity" evidence="6">
    <location>
        <begin position="772"/>
        <end position="792"/>
    </location>
</feature>
<feature type="binding site" evidence="1">
    <location>
        <position position="111"/>
    </location>
    <ligand>
        <name>a protein</name>
        <dbReference type="ChEBI" id="CHEBI:16541"/>
    </ligand>
    <ligandPart>
        <name>N(6)-acetyl-N(6)-methyl-L-lysine residue</name>
        <dbReference type="ChEBI" id="CHEBI:197459"/>
    </ligandPart>
</feature>
<feature type="binding site" evidence="1">
    <location>
        <position position="154"/>
    </location>
    <ligand>
        <name>a protein</name>
        <dbReference type="ChEBI" id="CHEBI:16541"/>
    </ligand>
    <ligandPart>
        <name>N(6)-acetyl-N(6)-methyl-L-lysine residue</name>
        <dbReference type="ChEBI" id="CHEBI:197459"/>
    </ligandPart>
</feature>
<feature type="binding site" evidence="1">
    <location>
        <position position="155"/>
    </location>
    <ligand>
        <name>a protein</name>
        <dbReference type="ChEBI" id="CHEBI:16541"/>
    </ligand>
    <ligandPart>
        <name>N(6)-acetyl-L-lysine residue</name>
        <dbReference type="ChEBI" id="CHEBI:61930"/>
    </ligandPart>
</feature>
<feature type="binding site" evidence="1">
    <location>
        <position position="155"/>
    </location>
    <ligand>
        <name>a protein</name>
        <dbReference type="ChEBI" id="CHEBI:16541"/>
    </ligand>
    <ligandPart>
        <name>N(6)-acetyl-N(6)-methyl-L-lysine residue</name>
        <dbReference type="ChEBI" id="CHEBI:197459"/>
    </ligandPart>
</feature>
<feature type="binding site" evidence="1">
    <location>
        <position position="156"/>
    </location>
    <ligand>
        <name>a protein</name>
        <dbReference type="ChEBI" id="CHEBI:16541"/>
    </ligand>
    <ligandPart>
        <name>N(6)-acetyl-N(6)-methyl-L-lysine residue</name>
        <dbReference type="ChEBI" id="CHEBI:197459"/>
    </ligandPart>
</feature>
<feature type="binding site" evidence="1">
    <location>
        <position position="159"/>
    </location>
    <ligand>
        <name>a protein</name>
        <dbReference type="ChEBI" id="CHEBI:16541"/>
    </ligand>
    <ligandPart>
        <name>N(6)-acetyl-L-lysine residue</name>
        <dbReference type="ChEBI" id="CHEBI:61930"/>
    </ligandPart>
</feature>
<feature type="binding site" evidence="1">
    <location>
        <position position="160"/>
    </location>
    <ligand>
        <name>a protein</name>
        <dbReference type="ChEBI" id="CHEBI:16541"/>
    </ligand>
    <ligandPart>
        <name>N(6)-acetyl-L-lysine residue</name>
        <dbReference type="ChEBI" id="CHEBI:61930"/>
    </ligandPart>
</feature>
<feature type="modified residue" description="N-acetylmethionine" evidence="1">
    <location>
        <position position="1"/>
    </location>
</feature>
<feature type="modified residue" description="Phosphothreonine" evidence="1">
    <location>
        <position position="6"/>
    </location>
</feature>
<feature type="modified residue" description="Phosphoserine" evidence="1">
    <location>
        <position position="36"/>
    </location>
</feature>
<feature type="modified residue" description="Phosphoserine" evidence="8">
    <location>
        <position position="297"/>
    </location>
</feature>
<feature type="modified residue" description="Phosphoserine" evidence="1">
    <location>
        <position position="300"/>
    </location>
</feature>
<feature type="modified residue" description="Phosphoserine" evidence="1">
    <location>
        <position position="304"/>
    </location>
</feature>
<feature type="modified residue" description="Phosphoserine" evidence="8">
    <location>
        <position position="631"/>
    </location>
</feature>
<reference key="1">
    <citation type="journal article" date="2004" name="Genome Res.">
        <title>The genomic sequence and comparative analysis of the rat major histocompatibility complex.</title>
        <authorList>
            <person name="Hurt P."/>
            <person name="Walter L."/>
            <person name="Sudbrak R."/>
            <person name="Klages S."/>
            <person name="Mueller I."/>
            <person name="Shiina T."/>
            <person name="Inoko H."/>
            <person name="Lehrach H."/>
            <person name="Guenther E."/>
            <person name="Reinhardt R."/>
            <person name="Himmelbauer H."/>
        </authorList>
    </citation>
    <scope>NUCLEOTIDE SEQUENCE [LARGE SCALE GENOMIC DNA]</scope>
    <source>
        <strain>Brown Norway</strain>
    </source>
</reference>
<reference key="2">
    <citation type="journal article" date="2012" name="Nat. Commun.">
        <title>Quantitative maps of protein phosphorylation sites across 14 different rat organs and tissues.</title>
        <authorList>
            <person name="Lundby A."/>
            <person name="Secher A."/>
            <person name="Lage K."/>
            <person name="Nordsborg N.B."/>
            <person name="Dmytriyev A."/>
            <person name="Lundby C."/>
            <person name="Olsen J.V."/>
        </authorList>
    </citation>
    <scope>PHOSPHORYLATION [LARGE SCALE ANALYSIS] AT SER-297 AND SER-631</scope>
    <scope>IDENTIFICATION BY MASS SPECTROMETRY [LARGE SCALE ANALYSIS]</scope>
</reference>
<proteinExistence type="evidence at protein level"/>
<dbReference type="EMBL" id="BX883042">
    <property type="protein sequence ID" value="CAE83937.1"/>
    <property type="molecule type" value="Genomic_DNA"/>
</dbReference>
<dbReference type="RefSeq" id="NP_997660.1">
    <property type="nucleotide sequence ID" value="NM_212495.1"/>
</dbReference>
<dbReference type="RefSeq" id="XP_017443518.1">
    <property type="nucleotide sequence ID" value="XM_017588029.1"/>
</dbReference>
<dbReference type="RefSeq" id="XP_017457067.1">
    <property type="nucleotide sequence ID" value="XM_017601578.3"/>
</dbReference>
<dbReference type="RefSeq" id="XP_017457068.1">
    <property type="nucleotide sequence ID" value="XM_017601579.1"/>
</dbReference>
<dbReference type="RefSeq" id="XP_017457351.1">
    <property type="nucleotide sequence ID" value="XM_017601862.1"/>
</dbReference>
<dbReference type="RefSeq" id="XP_063135088.1">
    <property type="nucleotide sequence ID" value="XM_063279018.1"/>
</dbReference>
<dbReference type="SMR" id="Q6MGA9"/>
<dbReference type="FunCoup" id="Q6MGA9">
    <property type="interactions" value="2806"/>
</dbReference>
<dbReference type="STRING" id="10116.ENSRNOP00000000535"/>
<dbReference type="iPTMnet" id="Q6MGA9"/>
<dbReference type="PhosphoSitePlus" id="Q6MGA9"/>
<dbReference type="PaxDb" id="10116-ENSRNOP00000000535"/>
<dbReference type="Ensembl" id="ENSRNOT00000000535.6">
    <property type="protein sequence ID" value="ENSRNOP00000000535.4"/>
    <property type="gene ID" value="ENSRNOG00000000461.8"/>
</dbReference>
<dbReference type="GeneID" id="294276"/>
<dbReference type="KEGG" id="rno:294276"/>
<dbReference type="UCSC" id="RGD:1303324">
    <property type="organism name" value="rat"/>
</dbReference>
<dbReference type="AGR" id="RGD:1303324"/>
<dbReference type="CTD" id="6046"/>
<dbReference type="RGD" id="1303324">
    <property type="gene designation" value="Brd2"/>
</dbReference>
<dbReference type="eggNOG" id="KOG1474">
    <property type="taxonomic scope" value="Eukaryota"/>
</dbReference>
<dbReference type="GeneTree" id="ENSGT00940000153385"/>
<dbReference type="HOGENOM" id="CLU_001499_0_4_1"/>
<dbReference type="InParanoid" id="Q6MGA9"/>
<dbReference type="OMA" id="GGMDQHT"/>
<dbReference type="OrthoDB" id="21449at2759"/>
<dbReference type="PhylomeDB" id="Q6MGA9"/>
<dbReference type="TreeFam" id="TF317345"/>
<dbReference type="PRO" id="PR:Q6MGA9"/>
<dbReference type="Proteomes" id="UP000002494">
    <property type="component" value="Chromosome 20"/>
</dbReference>
<dbReference type="Bgee" id="ENSRNOG00000000461">
    <property type="expression patterns" value="Expressed in testis and 19 other cell types or tissues"/>
</dbReference>
<dbReference type="ExpressionAtlas" id="Q6MGA9">
    <property type="expression patterns" value="baseline"/>
</dbReference>
<dbReference type="GO" id="GO:0000785">
    <property type="term" value="C:chromatin"/>
    <property type="evidence" value="ECO:0000266"/>
    <property type="project" value="RGD"/>
</dbReference>
<dbReference type="GO" id="GO:0005737">
    <property type="term" value="C:cytoplasm"/>
    <property type="evidence" value="ECO:0000266"/>
    <property type="project" value="RGD"/>
</dbReference>
<dbReference type="GO" id="GO:0016607">
    <property type="term" value="C:nuclear speck"/>
    <property type="evidence" value="ECO:0007669"/>
    <property type="project" value="Ensembl"/>
</dbReference>
<dbReference type="GO" id="GO:0005634">
    <property type="term" value="C:nucleus"/>
    <property type="evidence" value="ECO:0000266"/>
    <property type="project" value="RGD"/>
</dbReference>
<dbReference type="GO" id="GO:0140033">
    <property type="term" value="F:acetylation-dependent protein binding"/>
    <property type="evidence" value="ECO:0000266"/>
    <property type="project" value="RGD"/>
</dbReference>
<dbReference type="GO" id="GO:0003682">
    <property type="term" value="F:chromatin binding"/>
    <property type="evidence" value="ECO:0000266"/>
    <property type="project" value="RGD"/>
</dbReference>
<dbReference type="GO" id="GO:0140015">
    <property type="term" value="F:histone H3K14ac reader activity"/>
    <property type="evidence" value="ECO:0007669"/>
    <property type="project" value="Ensembl"/>
</dbReference>
<dbReference type="GO" id="GO:0140011">
    <property type="term" value="F:histone H4K12ac reader activity"/>
    <property type="evidence" value="ECO:0007669"/>
    <property type="project" value="Ensembl"/>
</dbReference>
<dbReference type="GO" id="GO:0140012">
    <property type="term" value="F:histone H4K5ac reader activity"/>
    <property type="evidence" value="ECO:0000250"/>
    <property type="project" value="UniProtKB"/>
</dbReference>
<dbReference type="GO" id="GO:0140566">
    <property type="term" value="F:histone reader activity"/>
    <property type="evidence" value="ECO:0000266"/>
    <property type="project" value="RGD"/>
</dbReference>
<dbReference type="GO" id="GO:0070577">
    <property type="term" value="F:lysine-acetylated histone binding"/>
    <property type="evidence" value="ECO:0000266"/>
    <property type="project" value="RGD"/>
</dbReference>
<dbReference type="GO" id="GO:0004674">
    <property type="term" value="F:protein serine/threonine kinase activity"/>
    <property type="evidence" value="ECO:0000266"/>
    <property type="project" value="RGD"/>
</dbReference>
<dbReference type="GO" id="GO:0140588">
    <property type="term" value="P:chromatin looping"/>
    <property type="evidence" value="ECO:0000250"/>
    <property type="project" value="UniProtKB"/>
</dbReference>
<dbReference type="GO" id="GO:0006338">
    <property type="term" value="P:chromatin remodeling"/>
    <property type="evidence" value="ECO:0000318"/>
    <property type="project" value="GO_Central"/>
</dbReference>
<dbReference type="GO" id="GO:0001843">
    <property type="term" value="P:neural tube closure"/>
    <property type="evidence" value="ECO:0000266"/>
    <property type="project" value="RGD"/>
</dbReference>
<dbReference type="GO" id="GO:0006334">
    <property type="term" value="P:nucleosome assembly"/>
    <property type="evidence" value="ECO:0000250"/>
    <property type="project" value="UniProtKB"/>
</dbReference>
<dbReference type="GO" id="GO:2000330">
    <property type="term" value="P:positive regulation of T-helper 17 cell lineage commitment"/>
    <property type="evidence" value="ECO:0000250"/>
    <property type="project" value="UniProtKB"/>
</dbReference>
<dbReference type="GO" id="GO:0071168">
    <property type="term" value="P:protein localization to chromatin"/>
    <property type="evidence" value="ECO:0000250"/>
    <property type="project" value="UniProtKB"/>
</dbReference>
<dbReference type="GO" id="GO:0006355">
    <property type="term" value="P:regulation of DNA-templated transcription"/>
    <property type="evidence" value="ECO:0000318"/>
    <property type="project" value="GO_Central"/>
</dbReference>
<dbReference type="GO" id="GO:0010468">
    <property type="term" value="P:regulation of gene expression"/>
    <property type="evidence" value="ECO:0000266"/>
    <property type="project" value="RGD"/>
</dbReference>
<dbReference type="GO" id="GO:0006357">
    <property type="term" value="P:regulation of transcription by RNA polymerase II"/>
    <property type="evidence" value="ECO:0000250"/>
    <property type="project" value="UniProtKB"/>
</dbReference>
<dbReference type="CDD" id="cd05497">
    <property type="entry name" value="Bromo_Brdt_I_like"/>
    <property type="match status" value="1"/>
</dbReference>
<dbReference type="CDD" id="cd05498">
    <property type="entry name" value="Bromo_Brdt_II_like"/>
    <property type="match status" value="1"/>
</dbReference>
<dbReference type="FunFam" id="1.20.920.10:FF:000003">
    <property type="entry name" value="Bromodomain-containing protein 2"/>
    <property type="match status" value="1"/>
</dbReference>
<dbReference type="FunFam" id="1.20.1270.220:FF:000001">
    <property type="entry name" value="bromodomain-containing protein 2 isoform X1"/>
    <property type="match status" value="1"/>
</dbReference>
<dbReference type="FunFam" id="1.20.920.10:FF:000002">
    <property type="entry name" value="Bromodomain-containing protein 4"/>
    <property type="match status" value="1"/>
</dbReference>
<dbReference type="Gene3D" id="1.20.1270.220">
    <property type="match status" value="1"/>
</dbReference>
<dbReference type="Gene3D" id="1.20.920.10">
    <property type="entry name" value="Bromodomain-like"/>
    <property type="match status" value="2"/>
</dbReference>
<dbReference type="InterPro" id="IPR043508">
    <property type="entry name" value="Bromo_Brdt_I"/>
</dbReference>
<dbReference type="InterPro" id="IPR043509">
    <property type="entry name" value="Bromo_Brdt_II"/>
</dbReference>
<dbReference type="InterPro" id="IPR050935">
    <property type="entry name" value="Bromo_chromatin_reader"/>
</dbReference>
<dbReference type="InterPro" id="IPR001487">
    <property type="entry name" value="Bromodomain"/>
</dbReference>
<dbReference type="InterPro" id="IPR036427">
    <property type="entry name" value="Bromodomain-like_sf"/>
</dbReference>
<dbReference type="InterPro" id="IPR018359">
    <property type="entry name" value="Bromodomain_CS"/>
</dbReference>
<dbReference type="InterPro" id="IPR027353">
    <property type="entry name" value="NET_dom"/>
</dbReference>
<dbReference type="InterPro" id="IPR038336">
    <property type="entry name" value="NET_sf"/>
</dbReference>
<dbReference type="PANTHER" id="PTHR22880:SF240">
    <property type="entry name" value="BROMODOMAIN-CONTAINING PROTEIN 2"/>
    <property type="match status" value="1"/>
</dbReference>
<dbReference type="PANTHER" id="PTHR22880">
    <property type="entry name" value="FALZ-RELATED BROMODOMAIN-CONTAINING PROTEINS"/>
    <property type="match status" value="1"/>
</dbReference>
<dbReference type="Pfam" id="PF17035">
    <property type="entry name" value="BET"/>
    <property type="match status" value="1"/>
</dbReference>
<dbReference type="Pfam" id="PF00439">
    <property type="entry name" value="Bromodomain"/>
    <property type="match status" value="2"/>
</dbReference>
<dbReference type="PRINTS" id="PR00503">
    <property type="entry name" value="BROMODOMAIN"/>
</dbReference>
<dbReference type="SMART" id="SM00297">
    <property type="entry name" value="BROMO"/>
    <property type="match status" value="2"/>
</dbReference>
<dbReference type="SUPFAM" id="SSF47370">
    <property type="entry name" value="Bromodomain"/>
    <property type="match status" value="2"/>
</dbReference>
<dbReference type="PROSITE" id="PS00633">
    <property type="entry name" value="BROMODOMAIN_1"/>
    <property type="match status" value="2"/>
</dbReference>
<dbReference type="PROSITE" id="PS50014">
    <property type="entry name" value="BROMODOMAIN_2"/>
    <property type="match status" value="2"/>
</dbReference>
<dbReference type="PROSITE" id="PS51525">
    <property type="entry name" value="NET"/>
    <property type="match status" value="1"/>
</dbReference>
<keyword id="KW-0007">Acetylation</keyword>
<keyword id="KW-0103">Bromodomain</keyword>
<keyword id="KW-0156">Chromatin regulator</keyword>
<keyword id="KW-0158">Chromosome</keyword>
<keyword id="KW-0539">Nucleus</keyword>
<keyword id="KW-0597">Phosphoprotein</keyword>
<keyword id="KW-1185">Reference proteome</keyword>
<keyword id="KW-0677">Repeat</keyword>
<keyword id="KW-0804">Transcription</keyword>
<keyword id="KW-0805">Transcription regulation</keyword>
<protein>
    <recommendedName>
        <fullName>Bromodomain-containing protein 2</fullName>
    </recommendedName>
    <alternativeName>
        <fullName>Protein RING3</fullName>
    </alternativeName>
</protein>
<gene>
    <name type="primary">Brd2</name>
    <name type="synonym">Ring3</name>
</gene>
<name>BRD2_RAT</name>
<organism>
    <name type="scientific">Rattus norvegicus</name>
    <name type="common">Rat</name>
    <dbReference type="NCBI Taxonomy" id="10116"/>
    <lineage>
        <taxon>Eukaryota</taxon>
        <taxon>Metazoa</taxon>
        <taxon>Chordata</taxon>
        <taxon>Craniata</taxon>
        <taxon>Vertebrata</taxon>
        <taxon>Euteleostomi</taxon>
        <taxon>Mammalia</taxon>
        <taxon>Eutheria</taxon>
        <taxon>Euarchontoglires</taxon>
        <taxon>Glires</taxon>
        <taxon>Rodentia</taxon>
        <taxon>Myomorpha</taxon>
        <taxon>Muroidea</taxon>
        <taxon>Muridae</taxon>
        <taxon>Murinae</taxon>
        <taxon>Rattus</taxon>
    </lineage>
</organism>
<evidence type="ECO:0000250" key="1">
    <source>
        <dbReference type="UniProtKB" id="P25440"/>
    </source>
</evidence>
<evidence type="ECO:0000250" key="2">
    <source>
        <dbReference type="UniProtKB" id="Q7JJ13"/>
    </source>
</evidence>
<evidence type="ECO:0000255" key="3"/>
<evidence type="ECO:0000255" key="4">
    <source>
        <dbReference type="PROSITE-ProRule" id="PRU00035"/>
    </source>
</evidence>
<evidence type="ECO:0000255" key="5">
    <source>
        <dbReference type="PROSITE-ProRule" id="PRU00857"/>
    </source>
</evidence>
<evidence type="ECO:0000256" key="6">
    <source>
        <dbReference type="SAM" id="MobiDB-lite"/>
    </source>
</evidence>
<evidence type="ECO:0000305" key="7"/>
<evidence type="ECO:0007744" key="8">
    <source>
    </source>
</evidence>